<evidence type="ECO:0000250" key="1">
    <source>
        <dbReference type="UniProtKB" id="O22286"/>
    </source>
</evidence>
<evidence type="ECO:0000250" key="2">
    <source>
        <dbReference type="UniProtKB" id="P93002"/>
    </source>
</evidence>
<evidence type="ECO:0000250" key="3">
    <source>
        <dbReference type="UniProtKB" id="Q5ICL9"/>
    </source>
</evidence>
<evidence type="ECO:0000250" key="4">
    <source>
        <dbReference type="UniProtKB" id="Q9FDY4"/>
    </source>
</evidence>
<evidence type="ECO:0000255" key="5"/>
<evidence type="ECO:0000255" key="6">
    <source>
        <dbReference type="PROSITE-ProRule" id="PRU00037"/>
    </source>
</evidence>
<evidence type="ECO:0000255" key="7">
    <source>
        <dbReference type="PROSITE-ProRule" id="PRU01391"/>
    </source>
</evidence>
<evidence type="ECO:0000256" key="8">
    <source>
        <dbReference type="SAM" id="MobiDB-lite"/>
    </source>
</evidence>
<evidence type="ECO:0000269" key="9">
    <source>
    </source>
</evidence>
<evidence type="ECO:0000269" key="10">
    <source>
    </source>
</evidence>
<evidence type="ECO:0000269" key="11">
    <source ref="2"/>
</evidence>
<evidence type="ECO:0000303" key="12">
    <source>
    </source>
</evidence>
<evidence type="ECO:0000303" key="13">
    <source ref="2"/>
</evidence>
<evidence type="ECO:0000305" key="14"/>
<evidence type="ECO:0000312" key="15">
    <source>
        <dbReference type="EMBL" id="EEC70102.1"/>
    </source>
</evidence>
<protein>
    <recommendedName>
        <fullName evidence="14">BTB/POZ domain and ankyrin repeat-containing protein NPR1</fullName>
        <shortName evidence="13">OsNPR1</shortName>
    </recommendedName>
    <alternativeName>
        <fullName evidence="14">NPR1 homolog 1</fullName>
        <shortName evidence="12">OsNH1</shortName>
    </alternativeName>
</protein>
<name>NPR1_ORYSI</name>
<accession>Q5D0W8</accession>
<accession>B8ADQ5</accession>
<gene>
    <name evidence="13" type="primary">NPR1</name>
    <name evidence="12" type="synonym">NH1</name>
    <name evidence="15" type="ORF">OsI_00749</name>
</gene>
<keyword id="KW-0040">ANK repeat</keyword>
<keyword id="KW-0963">Cytoplasm</keyword>
<keyword id="KW-1015">Disulfide bond</keyword>
<keyword id="KW-0479">Metal-binding</keyword>
<keyword id="KW-0539">Nucleus</keyword>
<keyword id="KW-0611">Plant defense</keyword>
<keyword id="KW-1185">Reference proteome</keyword>
<keyword id="KW-0677">Repeat</keyword>
<keyword id="KW-0833">Ubl conjugation pathway</keyword>
<keyword id="KW-0862">Zinc</keyword>
<keyword id="KW-0863">Zinc-finger</keyword>
<proteinExistence type="evidence at protein level"/>
<comment type="function">
    <text evidence="1 2 3 4 9 11">Salicylic acid (SA)-binding substrate-specific adapter of an E3 ubiquitin-protein ligase complex (CUL3-RBX1-BTB) which mediates the ubiquitination and subsequent proteasomal degradation of target proteins (By similarity). Transcription cofactor that represses gene expression in the absence of salicylic acid (SA), when attached to negative cis-elements (W-box) with WRKY transcription factors, but stimulates gene expression upon activation by SA, when sumoylated and attached to positive cis-elements (as-1) with TGA transcription factors, thus confering immunity through a series of gene regulations ending in a significant increase in antimicrobial and defense genes expression (By similarity). Key positive factor of disease resistance (PubMed:15986920, Ref.2). Involved in defense response against the bacterial blight disease caused by Xanthomonas oryzae pv. oryzae (Xoo). Plants over-expressing NPR1/NH1 acquire high levels of resistance to Xoo, express constitutively defense genes and develop lesion-mimic spots on leaves at pre-flowering stage (PubMed:15986920). Involved in basal resistance to the blast pathogen Magnaporthe oryzae. Plants over-expressing NPR1/NH1 have increased resistance to M.oryzae infection (Ref.2). Plays an essential role in benzothiadiazole (BTH)-induced resistance to the blast fungus disease caused by Magnaporthe oryzae (By similarity). Functions as a transcriptional coactivator of TGA2.1 and LG2 in vitro (By similarity). Involved in defense response against herbivore. Plants silencing NPR1/NH1 have increased herbivore-induced trypsin proteinase inhibitors and volatiles, which reduces the performance of the striped stem borer (SSB) Chilo suppressalis (By similarity).</text>
</comment>
<comment type="pathway">
    <text evidence="1">Protein modification; protein ubiquitination.</text>
</comment>
<comment type="subunit">
    <text evidence="4 10 11">Oligomer in an uninduced state; disulfide-linked. Forms activated monomer upon changes in cellular redox potential (By similarity). Interacts with TGA2.2 (Ref.2). Interacts with NRR (PubMed:16115061).</text>
</comment>
<comment type="subcellular location">
    <subcellularLocation>
        <location evidence="4">Cytoplasm</location>
    </subcellularLocation>
    <subcellularLocation>
        <location evidence="4">Nucleus</location>
    </subcellularLocation>
    <subcellularLocation>
        <location evidence="2">Nucleus</location>
        <location evidence="2">Nuclear body</location>
    </subcellularLocation>
    <text evidence="2">Accumulation as monomer in nucleus after induction by salicylic acid (SA) treatment or after pathogen infection.</text>
</comment>
<comment type="domain">
    <text evidence="1">The BTB/POZ domain mediates the interaction with some component of ubiquitin ligase complexes.</text>
</comment>
<comment type="similarity">
    <text evidence="14">Belongs to the plant 'ANKYRIN-BTB/POZ' family. 'NPR1-like' subfamily.</text>
</comment>
<comment type="sequence caution" evidence="14">
    <conflict type="erroneous gene model prediction">
        <sequence resource="EMBL-CDS" id="EEC70102"/>
    </conflict>
</comment>
<reference key="1">
    <citation type="journal article" date="2005" name="Mol. Plant Microbe Interact.">
        <title>Overexpression of a rice NPR1 homolog leads to constitutive activation of defense response and hypersensitivity to light.</title>
        <authorList>
            <person name="Chern M."/>
            <person name="Fitzgerald H.A."/>
            <person name="Canlas P.E."/>
            <person name="Navarre D.A."/>
            <person name="Ronald P.C."/>
        </authorList>
    </citation>
    <scope>NUCLEOTIDE SEQUENCE [MRNA]</scope>
    <scope>FUNCTION</scope>
    <scope>INTERACTION WITH TGA2.2</scope>
    <scope>MUTAGENESIS OF CYS-150 AND HIS-338</scope>
    <source>
        <strain>cv. IRBB21</strain>
    </source>
</reference>
<reference key="2">
    <citation type="journal article" date="2011" name="Eur. J. Plant Pathol.">
        <title>Involvement of OsNPR1/NH1 in rice basal resistance to blast fungus Magnaporthe oryzae.</title>
        <authorList>
            <person name="Feng J.X."/>
            <person name="Cao L."/>
            <person name="Li J."/>
            <person name="Duan C.J."/>
            <person name="Luo X.M."/>
            <person name="Le N."/>
            <person name="Wei H.H."/>
            <person name="Liang S.J."/>
            <person name="Chu C.C."/>
            <person name="Pan Q.H."/>
            <person name="Tang J.L."/>
        </authorList>
    </citation>
    <scope>NUCLEOTIDE SEQUENCE [GENOMIC DNA / MRNA]</scope>
    <scope>FUNCTION</scope>
    <source>
        <strain>cv. Gui99</strain>
    </source>
</reference>
<reference key="3">
    <citation type="journal article" date="2005" name="PLoS Biol.">
        <title>The genomes of Oryza sativa: a history of duplications.</title>
        <authorList>
            <person name="Yu J."/>
            <person name="Wang J."/>
            <person name="Lin W."/>
            <person name="Li S."/>
            <person name="Li H."/>
            <person name="Zhou J."/>
            <person name="Ni P."/>
            <person name="Dong W."/>
            <person name="Hu S."/>
            <person name="Zeng C."/>
            <person name="Zhang J."/>
            <person name="Zhang Y."/>
            <person name="Li R."/>
            <person name="Xu Z."/>
            <person name="Li S."/>
            <person name="Li X."/>
            <person name="Zheng H."/>
            <person name="Cong L."/>
            <person name="Lin L."/>
            <person name="Yin J."/>
            <person name="Geng J."/>
            <person name="Li G."/>
            <person name="Shi J."/>
            <person name="Liu J."/>
            <person name="Lv H."/>
            <person name="Li J."/>
            <person name="Wang J."/>
            <person name="Deng Y."/>
            <person name="Ran L."/>
            <person name="Shi X."/>
            <person name="Wang X."/>
            <person name="Wu Q."/>
            <person name="Li C."/>
            <person name="Ren X."/>
            <person name="Wang J."/>
            <person name="Wang X."/>
            <person name="Li D."/>
            <person name="Liu D."/>
            <person name="Zhang X."/>
            <person name="Ji Z."/>
            <person name="Zhao W."/>
            <person name="Sun Y."/>
            <person name="Zhang Z."/>
            <person name="Bao J."/>
            <person name="Han Y."/>
            <person name="Dong L."/>
            <person name="Ji J."/>
            <person name="Chen P."/>
            <person name="Wu S."/>
            <person name="Liu J."/>
            <person name="Xiao Y."/>
            <person name="Bu D."/>
            <person name="Tan J."/>
            <person name="Yang L."/>
            <person name="Ye C."/>
            <person name="Zhang J."/>
            <person name="Xu J."/>
            <person name="Zhou Y."/>
            <person name="Yu Y."/>
            <person name="Zhang B."/>
            <person name="Zhuang S."/>
            <person name="Wei H."/>
            <person name="Liu B."/>
            <person name="Lei M."/>
            <person name="Yu H."/>
            <person name="Li Y."/>
            <person name="Xu H."/>
            <person name="Wei S."/>
            <person name="He X."/>
            <person name="Fang L."/>
            <person name="Zhang Z."/>
            <person name="Zhang Y."/>
            <person name="Huang X."/>
            <person name="Su Z."/>
            <person name="Tong W."/>
            <person name="Li J."/>
            <person name="Tong Z."/>
            <person name="Li S."/>
            <person name="Ye J."/>
            <person name="Wang L."/>
            <person name="Fang L."/>
            <person name="Lei T."/>
            <person name="Chen C.-S."/>
            <person name="Chen H.-C."/>
            <person name="Xu Z."/>
            <person name="Li H."/>
            <person name="Huang H."/>
            <person name="Zhang F."/>
            <person name="Xu H."/>
            <person name="Li N."/>
            <person name="Zhao C."/>
            <person name="Li S."/>
            <person name="Dong L."/>
            <person name="Huang Y."/>
            <person name="Li L."/>
            <person name="Xi Y."/>
            <person name="Qi Q."/>
            <person name="Li W."/>
            <person name="Zhang B."/>
            <person name="Hu W."/>
            <person name="Zhang Y."/>
            <person name="Tian X."/>
            <person name="Jiao Y."/>
            <person name="Liang X."/>
            <person name="Jin J."/>
            <person name="Gao L."/>
            <person name="Zheng W."/>
            <person name="Hao B."/>
            <person name="Liu S.-M."/>
            <person name="Wang W."/>
            <person name="Yuan L."/>
            <person name="Cao M."/>
            <person name="McDermott J."/>
            <person name="Samudrala R."/>
            <person name="Wang J."/>
            <person name="Wong G.K.-S."/>
            <person name="Yang H."/>
        </authorList>
    </citation>
    <scope>NUCLEOTIDE SEQUENCE [LARGE SCALE GENOMIC DNA]</scope>
    <source>
        <strain>cv. 93-11</strain>
    </source>
</reference>
<reference key="4">
    <citation type="journal article" date="2005" name="Plant J.">
        <title>Rice NRR, a negative regulator of disease resistance, interacts with Arabidopsis NPR1 and rice NH1.</title>
        <authorList>
            <person name="Chern M."/>
            <person name="Canlas P.E."/>
            <person name="Fitzgerald H.A."/>
            <person name="Ronald P.C."/>
        </authorList>
    </citation>
    <scope>INTERACTION WITH NRR</scope>
</reference>
<sequence length="582" mass="63897">MEPPTSHVTNAFSDSDSASVEEGDADADADVEALRRLSDNLAAAFRSPEDFAFLADARIAVPGGGGGGGDLRVHRCVLSARSPFLRGVFARRAAAAAGGGGEDGSERLELRELLGGGGEEVEVGYEALRLVLDYLYSGRVGDLPKAACLCVDEDCAHVGCHPAVAFMAQVLFAASTFQVAELTNLFQRRLLDVLDKVEVDNLLLILSVANLCNKSCMKLLERCLDMVVRSNLDMITLEKSLPPDVIKQIIDARLSLGLISPENKGFPNKHVRRIHRALDSDDVELVRMLLTEGQTNLDDAFALHYAVEHCDSKITTELLDLALADVNHRNPRGYTVLHIAARRREPKIIVSLLTKGARPADVTFDGRKAVQISKRLTKQGDYFGVTEEGKPSPKDRLCIEILEQAERRDPQLGEASVSLAMAGESLRGRLLYLENRVALARIMFPMEARVAMDIAQVDGTLEFNLGSGANPPPERQRTTVDLNESPFIMKEEHLARMTALSKTVELGKRFFPRCSNVLDKIMDDETDPVSLGRDTSAEKRKRFHDLQDVLQKAFHEDKEENDRSGLSSSSSSTSIGAIRPRR</sequence>
<dbReference type="EMBL" id="AY923983">
    <property type="protein sequence ID" value="AAX18700.1"/>
    <property type="molecule type" value="mRNA"/>
</dbReference>
<dbReference type="EMBL" id="GU722159">
    <property type="protein sequence ID" value="ADE05560.1"/>
    <property type="molecule type" value="Genomic_DNA"/>
</dbReference>
<dbReference type="EMBL" id="GU722160">
    <property type="protein sequence ID" value="ADE05561.1"/>
    <property type="molecule type" value="mRNA"/>
</dbReference>
<dbReference type="EMBL" id="CM000126">
    <property type="protein sequence ID" value="EEC70102.1"/>
    <property type="status" value="ALT_SEQ"/>
    <property type="molecule type" value="Genomic_DNA"/>
</dbReference>
<dbReference type="SMR" id="Q5D0W8"/>
<dbReference type="STRING" id="39946.Q5D0W8"/>
<dbReference type="EnsemblPlants" id="OsGoSa_01g0006660.02">
    <property type="protein sequence ID" value="OsGoSa_01g0006660.02"/>
    <property type="gene ID" value="OsGoSa_01g0006660"/>
</dbReference>
<dbReference type="EnsemblPlants" id="OsKYG_01g0006610.01">
    <property type="protein sequence ID" value="OsKYG_01g0006610.01"/>
    <property type="gene ID" value="OsKYG_01g0006610"/>
</dbReference>
<dbReference type="EnsemblPlants" id="OsLaMu_01g0006570.02">
    <property type="protein sequence ID" value="OsLaMu_01g0006570.02"/>
    <property type="gene ID" value="OsLaMu_01g0006570"/>
</dbReference>
<dbReference type="EnsemblPlants" id="OsLima_01g0006410.02">
    <property type="protein sequence ID" value="OsLima_01g0006410.02"/>
    <property type="gene ID" value="OsLima_01g0006410"/>
</dbReference>
<dbReference type="EnsemblPlants" id="OsLiXu_01g0006620.01">
    <property type="protein sequence ID" value="OsLiXu_01g0006620.01"/>
    <property type="gene ID" value="OsLiXu_01g0006620"/>
</dbReference>
<dbReference type="EnsemblPlants" id="OsMH63_01G006830_02">
    <property type="protein sequence ID" value="OsMH63_01G006830_02"/>
    <property type="gene ID" value="OsMH63_01G006830"/>
</dbReference>
<dbReference type="EnsemblPlants" id="OsPr106_01g0006650.01">
    <property type="protein sequence ID" value="OsPr106_01g0006650.01"/>
    <property type="gene ID" value="OsPr106_01g0006650"/>
</dbReference>
<dbReference type="EnsemblPlants" id="OsZS97_01G006460_02">
    <property type="protein sequence ID" value="OsZS97_01G006460_02"/>
    <property type="gene ID" value="OsZS97_01G006460"/>
</dbReference>
<dbReference type="Gramene" id="OsGoSa_01g0006660.02">
    <property type="protein sequence ID" value="OsGoSa_01g0006660.02"/>
    <property type="gene ID" value="OsGoSa_01g0006660"/>
</dbReference>
<dbReference type="Gramene" id="OsKYG_01g0006610.01">
    <property type="protein sequence ID" value="OsKYG_01g0006610.01"/>
    <property type="gene ID" value="OsKYG_01g0006610"/>
</dbReference>
<dbReference type="Gramene" id="OsLaMu_01g0006570.02">
    <property type="protein sequence ID" value="OsLaMu_01g0006570.02"/>
    <property type="gene ID" value="OsLaMu_01g0006570"/>
</dbReference>
<dbReference type="Gramene" id="OsLima_01g0006410.02">
    <property type="protein sequence ID" value="OsLima_01g0006410.02"/>
    <property type="gene ID" value="OsLima_01g0006410"/>
</dbReference>
<dbReference type="Gramene" id="OsLiXu_01g0006620.01">
    <property type="protein sequence ID" value="OsLiXu_01g0006620.01"/>
    <property type="gene ID" value="OsLiXu_01g0006620"/>
</dbReference>
<dbReference type="Gramene" id="OsMH63_01G006830_02">
    <property type="protein sequence ID" value="OsMH63_01G006830_02"/>
    <property type="gene ID" value="OsMH63_01G006830"/>
</dbReference>
<dbReference type="Gramene" id="OsPr106_01g0006650.01">
    <property type="protein sequence ID" value="OsPr106_01g0006650.01"/>
    <property type="gene ID" value="OsPr106_01g0006650"/>
</dbReference>
<dbReference type="Gramene" id="OsZS97_01G006460_02">
    <property type="protein sequence ID" value="OsZS97_01G006460_02"/>
    <property type="gene ID" value="OsZS97_01G006460"/>
</dbReference>
<dbReference type="OrthoDB" id="71307at2759"/>
<dbReference type="UniPathway" id="UPA00143"/>
<dbReference type="Proteomes" id="UP000007015">
    <property type="component" value="Chromosome 1"/>
</dbReference>
<dbReference type="GO" id="GO:0005737">
    <property type="term" value="C:cytoplasm"/>
    <property type="evidence" value="ECO:0007669"/>
    <property type="project" value="UniProtKB-SubCell"/>
</dbReference>
<dbReference type="GO" id="GO:0016604">
    <property type="term" value="C:nuclear body"/>
    <property type="evidence" value="ECO:0007669"/>
    <property type="project" value="UniProtKB-SubCell"/>
</dbReference>
<dbReference type="GO" id="GO:0008270">
    <property type="term" value="F:zinc ion binding"/>
    <property type="evidence" value="ECO:0007669"/>
    <property type="project" value="UniProtKB-KW"/>
</dbReference>
<dbReference type="GO" id="GO:0042742">
    <property type="term" value="P:defense response to bacterium"/>
    <property type="evidence" value="ECO:0007669"/>
    <property type="project" value="TreeGrafter"/>
</dbReference>
<dbReference type="GO" id="GO:0050832">
    <property type="term" value="P:defense response to fungus"/>
    <property type="evidence" value="ECO:0007669"/>
    <property type="project" value="TreeGrafter"/>
</dbReference>
<dbReference type="GO" id="GO:2000022">
    <property type="term" value="P:regulation of jasmonic acid mediated signaling pathway"/>
    <property type="evidence" value="ECO:0007669"/>
    <property type="project" value="InterPro"/>
</dbReference>
<dbReference type="GO" id="GO:2000031">
    <property type="term" value="P:regulation of salicylic acid mediated signaling pathway"/>
    <property type="evidence" value="ECO:0007669"/>
    <property type="project" value="InterPro"/>
</dbReference>
<dbReference type="GO" id="GO:0009862">
    <property type="term" value="P:systemic acquired resistance, salicylic acid mediated signaling pathway"/>
    <property type="evidence" value="ECO:0007669"/>
    <property type="project" value="InterPro"/>
</dbReference>
<dbReference type="CDD" id="cd18310">
    <property type="entry name" value="BTB_POZ_NPR_plant"/>
    <property type="match status" value="1"/>
</dbReference>
<dbReference type="FunFam" id="1.25.40.20:FF:000239">
    <property type="entry name" value="BTB/POZ domain and ankyrin repeat-containing protein NPR1"/>
    <property type="match status" value="1"/>
</dbReference>
<dbReference type="FunFam" id="3.30.710.10:FF:000184">
    <property type="entry name" value="BTB/POZ domain and ankyrin repeat-containing protein NPR1"/>
    <property type="match status" value="1"/>
</dbReference>
<dbReference type="Gene3D" id="1.25.40.20">
    <property type="entry name" value="Ankyrin repeat-containing domain"/>
    <property type="match status" value="1"/>
</dbReference>
<dbReference type="Gene3D" id="3.30.710.10">
    <property type="entry name" value="Potassium Channel Kv1.1, Chain A"/>
    <property type="match status" value="1"/>
</dbReference>
<dbReference type="InterPro" id="IPR002110">
    <property type="entry name" value="Ankyrin_rpt"/>
</dbReference>
<dbReference type="InterPro" id="IPR036770">
    <property type="entry name" value="Ankyrin_rpt-contain_sf"/>
</dbReference>
<dbReference type="InterPro" id="IPR000210">
    <property type="entry name" value="BTB/POZ_dom"/>
</dbReference>
<dbReference type="InterPro" id="IPR044292">
    <property type="entry name" value="NPR"/>
</dbReference>
<dbReference type="InterPro" id="IPR021094">
    <property type="entry name" value="NPR1/NIM1-like_C"/>
</dbReference>
<dbReference type="InterPro" id="IPR024228">
    <property type="entry name" value="NPR_central_dom"/>
</dbReference>
<dbReference type="InterPro" id="IPR011333">
    <property type="entry name" value="SKP1/BTB/POZ_sf"/>
</dbReference>
<dbReference type="PANTHER" id="PTHR46475:SF1">
    <property type="entry name" value="REGULATORY PROTEIN NPR2"/>
    <property type="match status" value="1"/>
</dbReference>
<dbReference type="PANTHER" id="PTHR46475">
    <property type="entry name" value="REGULATORY PROTEIN NPR3"/>
    <property type="match status" value="1"/>
</dbReference>
<dbReference type="Pfam" id="PF11900">
    <property type="entry name" value="DUF3420"/>
    <property type="match status" value="1"/>
</dbReference>
<dbReference type="Pfam" id="PF12313">
    <property type="entry name" value="NPR1_like_C"/>
    <property type="match status" value="1"/>
</dbReference>
<dbReference type="SMART" id="SM00248">
    <property type="entry name" value="ANK"/>
    <property type="match status" value="3"/>
</dbReference>
<dbReference type="SMART" id="SM00225">
    <property type="entry name" value="BTB"/>
    <property type="match status" value="1"/>
</dbReference>
<dbReference type="SUPFAM" id="SSF48403">
    <property type="entry name" value="Ankyrin repeat"/>
    <property type="match status" value="1"/>
</dbReference>
<dbReference type="SUPFAM" id="SSF54695">
    <property type="entry name" value="POZ domain"/>
    <property type="match status" value="1"/>
</dbReference>
<dbReference type="PROSITE" id="PS50297">
    <property type="entry name" value="ANK_REP_REGION"/>
    <property type="match status" value="1"/>
</dbReference>
<dbReference type="PROSITE" id="PS50088">
    <property type="entry name" value="ANK_REPEAT"/>
    <property type="match status" value="1"/>
</dbReference>
<dbReference type="PROSITE" id="PS50097">
    <property type="entry name" value="BTB"/>
    <property type="match status" value="1"/>
</dbReference>
<dbReference type="PROSITE" id="PS52046">
    <property type="entry name" value="ZF_C2HC_NPR"/>
    <property type="match status" value="1"/>
</dbReference>
<feature type="chain" id="PRO_0000436999" description="BTB/POZ domain and ankyrin repeat-containing protein NPR1">
    <location>
        <begin position="1"/>
        <end position="582"/>
    </location>
</feature>
<feature type="domain" description="BTB" evidence="6">
    <location>
        <begin position="55"/>
        <end position="140"/>
    </location>
</feature>
<feature type="repeat" description="ANK 1" evidence="5">
    <location>
        <begin position="229"/>
        <end position="258"/>
    </location>
</feature>
<feature type="repeat" description="ANK 2" evidence="5">
    <location>
        <begin position="269"/>
        <end position="299"/>
    </location>
</feature>
<feature type="repeat" description="ANK 3" evidence="5">
    <location>
        <begin position="301"/>
        <end position="328"/>
    </location>
</feature>
<feature type="repeat" description="ANK 4" evidence="5">
    <location>
        <begin position="332"/>
        <end position="361"/>
    </location>
</feature>
<feature type="zinc finger region" description="C2HC NPR-type" evidence="7">
    <location>
        <begin position="147"/>
        <end position="161"/>
    </location>
</feature>
<feature type="region of interest" description="Disordered" evidence="8">
    <location>
        <begin position="1"/>
        <end position="27"/>
    </location>
</feature>
<feature type="region of interest" description="Salicylic acid-binding core (SBC)" evidence="3">
    <location>
        <begin position="391"/>
        <end position="526"/>
    </location>
</feature>
<feature type="region of interest" description="Disordered" evidence="8">
    <location>
        <begin position="525"/>
        <end position="544"/>
    </location>
</feature>
<feature type="region of interest" description="Disordered" evidence="8">
    <location>
        <begin position="551"/>
        <end position="582"/>
    </location>
</feature>
<feature type="compositionally biased region" description="Polar residues" evidence="8">
    <location>
        <begin position="1"/>
        <end position="12"/>
    </location>
</feature>
<feature type="compositionally biased region" description="Basic and acidic residues" evidence="8">
    <location>
        <begin position="553"/>
        <end position="563"/>
    </location>
</feature>
<feature type="compositionally biased region" description="Low complexity" evidence="8">
    <location>
        <begin position="564"/>
        <end position="574"/>
    </location>
</feature>
<feature type="binding site" evidence="7">
    <location>
        <position position="150"/>
    </location>
    <ligand>
        <name>Zn(2+)</name>
        <dbReference type="ChEBI" id="CHEBI:29105"/>
    </ligand>
</feature>
<feature type="binding site" evidence="7">
    <location>
        <position position="155"/>
    </location>
    <ligand>
        <name>Zn(2+)</name>
        <dbReference type="ChEBI" id="CHEBI:29105"/>
    </ligand>
</feature>
<feature type="binding site" evidence="7">
    <location>
        <position position="157"/>
    </location>
    <ligand>
        <name>Zn(2+)</name>
        <dbReference type="ChEBI" id="CHEBI:29105"/>
    </ligand>
</feature>
<feature type="binding site" evidence="7">
    <location>
        <position position="160"/>
    </location>
    <ligand>
        <name>Zn(2+)</name>
        <dbReference type="ChEBI" id="CHEBI:29105"/>
    </ligand>
</feature>
<feature type="binding site" evidence="3">
    <location>
        <position position="436"/>
    </location>
    <ligand>
        <name>salicylate</name>
        <dbReference type="ChEBI" id="CHEBI:30762"/>
    </ligand>
</feature>
<feature type="disulfide bond" description="Interchain (with C-216); in linked form" evidence="2">
    <location>
        <position position="76"/>
    </location>
</feature>
<feature type="disulfide bond" description="Interchain (with C-76); in linked form" evidence="2">
    <location>
        <position position="216"/>
    </location>
</feature>
<feature type="mutagenesis site" description="Abolishes the interaction with TGA2.2." evidence="9">
    <original>C</original>
    <variation>Y</variation>
    <location>
        <position position="150"/>
    </location>
</feature>
<feature type="mutagenesis site" description="Abolishes the interaction with TGA2.2." evidence="9">
    <original>H</original>
    <variation>Y</variation>
    <location>
        <position position="338"/>
    </location>
</feature>
<organism>
    <name type="scientific">Oryza sativa subsp. indica</name>
    <name type="common">Rice</name>
    <dbReference type="NCBI Taxonomy" id="39946"/>
    <lineage>
        <taxon>Eukaryota</taxon>
        <taxon>Viridiplantae</taxon>
        <taxon>Streptophyta</taxon>
        <taxon>Embryophyta</taxon>
        <taxon>Tracheophyta</taxon>
        <taxon>Spermatophyta</taxon>
        <taxon>Magnoliopsida</taxon>
        <taxon>Liliopsida</taxon>
        <taxon>Poales</taxon>
        <taxon>Poaceae</taxon>
        <taxon>BOP clade</taxon>
        <taxon>Oryzoideae</taxon>
        <taxon>Oryzeae</taxon>
        <taxon>Oryzinae</taxon>
        <taxon>Oryza</taxon>
        <taxon>Oryza sativa</taxon>
    </lineage>
</organism>